<protein>
    <recommendedName>
        <fullName evidence="6">Vanillin dehydrogenase</fullName>
        <ecNumber evidence="5">1.2.1.67</ecNumber>
    </recommendedName>
    <alternativeName>
        <fullName evidence="7">Aromatic aldehyde dehydrogenase</fullName>
        <ecNumber evidence="5">1.2.1.64</ecNumber>
        <ecNumber evidence="5">1.2.1.96</ecNumber>
    </alternativeName>
</protein>
<organism evidence="8 9">
    <name type="scientific">Corynebacterium glutamicum (strain ATCC 13032 / DSM 20300 / JCM 1318 / BCRC 11384 / CCUG 27702 / LMG 3730 / NBRC 12168 / NCIMB 10025 / NRRL B-2784 / 534)</name>
    <dbReference type="NCBI Taxonomy" id="196627"/>
    <lineage>
        <taxon>Bacteria</taxon>
        <taxon>Bacillati</taxon>
        <taxon>Actinomycetota</taxon>
        <taxon>Actinomycetes</taxon>
        <taxon>Mycobacteriales</taxon>
        <taxon>Corynebacteriaceae</taxon>
        <taxon>Corynebacterium</taxon>
    </lineage>
</organism>
<comment type="function">
    <text evidence="5 7">Catalyzes oxidation of vanillin to vanillate. Also oxidizes 3,4-dihydroxybenzaldehyde and 4-hydroxybenzaldehyde significantly. Other aromatic aldehyde substrates in the order of decreasing activity include 3-hydroxybenzaldehyde, 4-nitrobenzaldehyde, terephthalaldehyde, 2,4-dichlorobenzaldehyde, benzaldehyde and 3-phenylpropanal. Low activity with phthalaldehyde, cinnamaldehyde and syringaldehyde. No activity with phenylacetaldehyde, formaldehyde or aldehyde. Active with both NAD(+) and NADP(+) (PubMed:25622822). Involved in the degradation pathway of lignin-derived aromatic compounds of plant cell walls. Catalyzes the conversion of vanillin to vanillate due to toxicity of vanillin to the cells (Probable).</text>
</comment>
<comment type="catalytic activity">
    <reaction evidence="5">
        <text>vanillin + NAD(+) + H2O = vanillate + NADH + 2 H(+)</text>
        <dbReference type="Rhea" id="RHEA:13309"/>
        <dbReference type="ChEBI" id="CHEBI:15377"/>
        <dbReference type="ChEBI" id="CHEBI:15378"/>
        <dbReference type="ChEBI" id="CHEBI:16632"/>
        <dbReference type="ChEBI" id="CHEBI:18346"/>
        <dbReference type="ChEBI" id="CHEBI:57540"/>
        <dbReference type="ChEBI" id="CHEBI:57945"/>
        <dbReference type="EC" id="1.2.1.67"/>
    </reaction>
    <physiologicalReaction direction="left-to-right" evidence="5">
        <dbReference type="Rhea" id="RHEA:13310"/>
    </physiologicalReaction>
</comment>
<comment type="catalytic activity">
    <reaction evidence="5">
        <text>vanillin + NADP(+) + H2O = vanillate + NADPH + 2 H(+)</text>
        <dbReference type="Rhea" id="RHEA:72535"/>
        <dbReference type="ChEBI" id="CHEBI:15377"/>
        <dbReference type="ChEBI" id="CHEBI:15378"/>
        <dbReference type="ChEBI" id="CHEBI:16632"/>
        <dbReference type="ChEBI" id="CHEBI:18346"/>
        <dbReference type="ChEBI" id="CHEBI:57783"/>
        <dbReference type="ChEBI" id="CHEBI:58349"/>
    </reaction>
    <physiologicalReaction direction="left-to-right" evidence="5">
        <dbReference type="Rhea" id="RHEA:72536"/>
    </physiologicalReaction>
</comment>
<comment type="catalytic activity">
    <reaction evidence="5">
        <text>3,4-dihydroxybenzaldehyde + NAD(+) + H2O = 3,4-dihydroxybenzoate + NADH + 2 H(+)</text>
        <dbReference type="Rhea" id="RHEA:36311"/>
        <dbReference type="ChEBI" id="CHEBI:15377"/>
        <dbReference type="ChEBI" id="CHEBI:15378"/>
        <dbReference type="ChEBI" id="CHEBI:36241"/>
        <dbReference type="ChEBI" id="CHEBI:50205"/>
        <dbReference type="ChEBI" id="CHEBI:57540"/>
        <dbReference type="ChEBI" id="CHEBI:57945"/>
    </reaction>
    <physiologicalReaction direction="left-to-right" evidence="5">
        <dbReference type="Rhea" id="RHEA:36312"/>
    </physiologicalReaction>
</comment>
<comment type="catalytic activity">
    <reaction evidence="5">
        <text>3,4-dihydroxybenzaldehyde + NADP(+) + H2O = 3,4-dihydroxybenzoate + NADPH + 2 H(+)</text>
        <dbReference type="Rhea" id="RHEA:72539"/>
        <dbReference type="ChEBI" id="CHEBI:15377"/>
        <dbReference type="ChEBI" id="CHEBI:15378"/>
        <dbReference type="ChEBI" id="CHEBI:36241"/>
        <dbReference type="ChEBI" id="CHEBI:50205"/>
        <dbReference type="ChEBI" id="CHEBI:57783"/>
        <dbReference type="ChEBI" id="CHEBI:58349"/>
    </reaction>
    <physiologicalReaction direction="left-to-right" evidence="5">
        <dbReference type="Rhea" id="RHEA:72540"/>
    </physiologicalReaction>
</comment>
<comment type="catalytic activity">
    <reaction evidence="5">
        <text>4-hydroxybenzaldehyde + NAD(+) + H2O = 4-hydroxybenzoate + NADH + 2 H(+)</text>
        <dbReference type="Rhea" id="RHEA:20305"/>
        <dbReference type="ChEBI" id="CHEBI:15377"/>
        <dbReference type="ChEBI" id="CHEBI:15378"/>
        <dbReference type="ChEBI" id="CHEBI:17597"/>
        <dbReference type="ChEBI" id="CHEBI:17879"/>
        <dbReference type="ChEBI" id="CHEBI:57540"/>
        <dbReference type="ChEBI" id="CHEBI:57945"/>
        <dbReference type="EC" id="1.2.1.64"/>
    </reaction>
    <physiologicalReaction direction="left-to-right" evidence="5">
        <dbReference type="Rhea" id="RHEA:20306"/>
    </physiologicalReaction>
</comment>
<comment type="catalytic activity">
    <reaction evidence="5">
        <text>4-hydroxybenzaldehyde + NADP(+) + H2O = 4-hydroxybenzoate + NADPH + 2 H(+)</text>
        <dbReference type="Rhea" id="RHEA:47936"/>
        <dbReference type="ChEBI" id="CHEBI:15377"/>
        <dbReference type="ChEBI" id="CHEBI:15378"/>
        <dbReference type="ChEBI" id="CHEBI:17597"/>
        <dbReference type="ChEBI" id="CHEBI:17879"/>
        <dbReference type="ChEBI" id="CHEBI:57783"/>
        <dbReference type="ChEBI" id="CHEBI:58349"/>
        <dbReference type="EC" id="1.2.1.96"/>
    </reaction>
    <physiologicalReaction direction="left-to-right" evidence="5">
        <dbReference type="Rhea" id="RHEA:47937"/>
    </physiologicalReaction>
</comment>
<comment type="biophysicochemical properties">
    <kinetics>
        <KM evidence="5">26.31 uM for vanillin in the presence of 0.5 mM NAD(+) (at pH 7.0)</KM>
        <KM evidence="5">30.44 uM for 3,4-dihydroxybenzaldehyde in the presence of 0.5 mM NAD(+) (at pH 7.0)</KM>
        <KM evidence="5">39.11 uM for 4-hydroxybenzaldehyde in the presence of 0.5 mM NAD(+) (at pH 7.0)</KM>
        <KM evidence="5">26.25 uM for NAD(+) in the presence of 1 mM vanillin</KM>
        <KM evidence="5">28.31 uM for NADP(+) in the presence of 1 mM vanillin</KM>
        <KM evidence="5">31.33 uM for NAD(+) in the presence of 1 mM 3,4-dihydroxybenzaldehyde</KM>
        <KM evidence="5">35.28 uM for NADP(+) in the presence of 1 mM 3,4-dihydroxybenzaldehyde</KM>
        <KM evidence="5">33.41 uM for NAD(+) in the presence of 1 mM 4-hydroxybenzaldehyde</KM>
        <KM evidence="5">37.4 uM for NADP(+) in the presence of 1 mM 4-hydroxybenzaldehyde</KM>
        <text evidence="5">kcat is 21.03 sec(-1) with vanillin as substrate in the presence of 0.5 mM NAD(+). kcat is 23.42 sec(-1) with 3,4-dihydroxybenzaldehyde as substrate in the presence of 0.5 mM NAD(+). kcat is 22.92 sec(-1) with 4-hydroxybenzaldehyde as substrate in the presence of 0.5 mM NAD(+). kcat is 17.88 sec(-1) with NAD(+) as substrate in the presence of 1 mM vanillin. kcat is 0.765 sec(-1) with NADP(+) as substrate in the presence of 1 mM vanillin. kcat is 19.62 sec(-1) with NAD(+) as substrate in the presence of 1 mM 3,4-dihydroxybenzaldehyde. kcat is 0.827 sec(-1) with NADP(+) as substrate in the presence of 1 mM 3,4-dihydroxybenzaldehyde. kcat is 20.46 sec(-1) with NAD(+) as substrate in the presence of 1 mM 4-hydroxybenzaldehyde. kcat is 0.906 sec(-1) with NADP(+) as substrate in the presence of 1 mM 4-hydroxybenzaldehyde.</text>
    </kinetics>
    <phDependence>
        <text evidence="5">Optimum pH is 7.0 for the NAD(+)-dependent oxidation of vanillin.</text>
    </phDependence>
    <temperatureDependence>
        <text evidence="5">Optimum temperature is 30 degrees Celsius for the NAD(+)-dependent oxidation of vanillin. No significant loss of activity at 4 degrees Celsius after two weeks.</text>
    </temperatureDependence>
</comment>
<comment type="subunit">
    <text evidence="5">Exists as a homodimer, homotrimer and homotetramer.</text>
</comment>
<comment type="disruption phenotype">
    <text evidence="5">Significantly decreased growth on vanillin, 3-hydroxybenzaldehyde, 4-hydroxybenzaldehyde, 3,4-dihydroxybenzaldehyde, ferulic acid and caffeic acid as the sole carbon and energy source.</text>
</comment>
<comment type="similarity">
    <text evidence="4">Belongs to the aldehyde dehydrogenase family.</text>
</comment>
<name>VDH_CORGL</name>
<reference evidence="9" key="1">
    <citation type="journal article" date="2003" name="Appl. Microbiol. Biotechnol.">
        <title>The Corynebacterium glutamicum genome: features and impacts on biotechnological processes.</title>
        <authorList>
            <person name="Ikeda M."/>
            <person name="Nakagawa S."/>
        </authorList>
    </citation>
    <scope>NUCLEOTIDE SEQUENCE [LARGE SCALE GENOMIC DNA]</scope>
    <source>
        <strain evidence="9">ATCC 13032 / DSM 20300 / JCM 1318 / BCRC 11384 / CCUG 27702 / LMG 3730 / NBRC 12168 / NCIMB 10025 / NRRL B-2784 / 534</strain>
    </source>
</reference>
<reference key="2">
    <citation type="journal article" date="2015" name="Sci. Rep.">
        <title>Functional characterization of a vanillin dehydrogenase in Corynebacterium glutamicum.</title>
        <authorList>
            <person name="Ding W."/>
            <person name="Si M."/>
            <person name="Zhang W."/>
            <person name="Zhang Y."/>
            <person name="Chen C."/>
            <person name="Zhang L."/>
            <person name="Lu Z."/>
            <person name="Chen S."/>
            <person name="Shen X."/>
        </authorList>
    </citation>
    <scope>FUNCTION</scope>
    <scope>CATALYTIC ACTIVITY</scope>
    <scope>SUBSTRATE SPECIFICITY</scope>
    <scope>BIOPHYSICOCHEMICAL PROPERTIES</scope>
    <scope>SUBUNIT</scope>
    <scope>DISRUPTION PHENOTYPE</scope>
    <scope>MUTAGENESIS OF ASN-157; LYS-180; GLU-199; GLU-258 AND CYS-292</scope>
</reference>
<dbReference type="EC" id="1.2.1.67" evidence="5"/>
<dbReference type="EC" id="1.2.1.64" evidence="5"/>
<dbReference type="EC" id="1.2.1.96" evidence="5"/>
<dbReference type="EMBL" id="BA000036">
    <property type="protein sequence ID" value="BAC00062.1"/>
    <property type="molecule type" value="Genomic_DNA"/>
</dbReference>
<dbReference type="RefSeq" id="NP_601867.1">
    <property type="nucleotide sequence ID" value="NC_003450.3"/>
</dbReference>
<dbReference type="RefSeq" id="WP_011015295.1">
    <property type="nucleotide sequence ID" value="NC_006958.1"/>
</dbReference>
<dbReference type="SMR" id="Q8NMB0"/>
<dbReference type="STRING" id="196627.cg2953"/>
<dbReference type="KEGG" id="cgl:Cgl2668"/>
<dbReference type="PATRIC" id="fig|196627.13.peg.2603"/>
<dbReference type="eggNOG" id="COG1012">
    <property type="taxonomic scope" value="Bacteria"/>
</dbReference>
<dbReference type="HOGENOM" id="CLU_005391_1_0_11"/>
<dbReference type="OrthoDB" id="6882680at2"/>
<dbReference type="BioCyc" id="CORYNE:G18NG-12285-MONOMER"/>
<dbReference type="BRENDA" id="1.2.1.67">
    <property type="organism ID" value="960"/>
</dbReference>
<dbReference type="Proteomes" id="UP000000582">
    <property type="component" value="Chromosome"/>
</dbReference>
<dbReference type="GO" id="GO:0018484">
    <property type="term" value="F:4-hydroxybenzaldehyde dehydrogenase (NAD+) activity"/>
    <property type="evidence" value="ECO:0007669"/>
    <property type="project" value="RHEA"/>
</dbReference>
<dbReference type="GO" id="GO:0050608">
    <property type="term" value="F:vanillin dehydrogenase activity"/>
    <property type="evidence" value="ECO:0007669"/>
    <property type="project" value="RHEA"/>
</dbReference>
<dbReference type="CDD" id="cd07151">
    <property type="entry name" value="ALDH_HBenzADH"/>
    <property type="match status" value="1"/>
</dbReference>
<dbReference type="FunFam" id="3.40.309.10:FF:000009">
    <property type="entry name" value="Aldehyde dehydrogenase A"/>
    <property type="match status" value="1"/>
</dbReference>
<dbReference type="FunFam" id="3.40.605.10:FF:000007">
    <property type="entry name" value="NAD/NADP-dependent betaine aldehyde dehydrogenase"/>
    <property type="match status" value="1"/>
</dbReference>
<dbReference type="Gene3D" id="3.40.605.10">
    <property type="entry name" value="Aldehyde Dehydrogenase, Chain A, domain 1"/>
    <property type="match status" value="1"/>
</dbReference>
<dbReference type="Gene3D" id="3.40.309.10">
    <property type="entry name" value="Aldehyde Dehydrogenase, Chain A, domain 2"/>
    <property type="match status" value="1"/>
</dbReference>
<dbReference type="InterPro" id="IPR016161">
    <property type="entry name" value="Ald_DH/histidinol_DH"/>
</dbReference>
<dbReference type="InterPro" id="IPR016163">
    <property type="entry name" value="Ald_DH_C"/>
</dbReference>
<dbReference type="InterPro" id="IPR029510">
    <property type="entry name" value="Ald_DH_CS_GLU"/>
</dbReference>
<dbReference type="InterPro" id="IPR016162">
    <property type="entry name" value="Ald_DH_N"/>
</dbReference>
<dbReference type="InterPro" id="IPR015590">
    <property type="entry name" value="Aldehyde_DH_dom"/>
</dbReference>
<dbReference type="PANTHER" id="PTHR42986">
    <property type="entry name" value="BENZALDEHYDE DEHYDROGENASE YFMT"/>
    <property type="match status" value="1"/>
</dbReference>
<dbReference type="PANTHER" id="PTHR42986:SF1">
    <property type="entry name" value="BENZALDEHYDE DEHYDROGENASE YFMT"/>
    <property type="match status" value="1"/>
</dbReference>
<dbReference type="Pfam" id="PF00171">
    <property type="entry name" value="Aldedh"/>
    <property type="match status" value="1"/>
</dbReference>
<dbReference type="SUPFAM" id="SSF53720">
    <property type="entry name" value="ALDH-like"/>
    <property type="match status" value="1"/>
</dbReference>
<dbReference type="PROSITE" id="PS00687">
    <property type="entry name" value="ALDEHYDE_DEHYDR_GLU"/>
    <property type="match status" value="1"/>
</dbReference>
<feature type="chain" id="PRO_0000456538" description="Vanillin dehydrogenase">
    <location>
        <begin position="1"/>
        <end position="484"/>
    </location>
</feature>
<feature type="active site" description="Proton acceptor" evidence="1 3">
    <location>
        <position position="258"/>
    </location>
</feature>
<feature type="active site" description="Nucleophile" evidence="1">
    <location>
        <position position="292"/>
    </location>
</feature>
<feature type="binding site" evidence="1">
    <location>
        <begin position="156"/>
        <end position="157"/>
    </location>
    <ligand>
        <name>NADP(+)</name>
        <dbReference type="ChEBI" id="CHEBI:58349"/>
    </ligand>
</feature>
<feature type="binding site" evidence="1">
    <location>
        <begin position="180"/>
        <end position="183"/>
    </location>
    <ligand>
        <name>NADP(+)</name>
        <dbReference type="ChEBI" id="CHEBI:58349"/>
    </ligand>
</feature>
<feature type="binding site" evidence="2">
    <location>
        <position position="180"/>
    </location>
    <ligand>
        <name>NAD(+)</name>
        <dbReference type="ChEBI" id="CHEBI:57540"/>
    </ligand>
</feature>
<feature type="binding site" evidence="2">
    <location>
        <begin position="234"/>
        <end position="239"/>
    </location>
    <ligand>
        <name>NAD(+)</name>
        <dbReference type="ChEBI" id="CHEBI:57540"/>
    </ligand>
</feature>
<feature type="binding site" evidence="1">
    <location>
        <begin position="234"/>
        <end position="235"/>
    </location>
    <ligand>
        <name>NADP(+)</name>
        <dbReference type="ChEBI" id="CHEBI:58349"/>
    </ligand>
</feature>
<feature type="binding site" evidence="1">
    <location>
        <position position="259"/>
    </location>
    <ligand>
        <name>NADP(+)</name>
        <dbReference type="ChEBI" id="CHEBI:58349"/>
    </ligand>
</feature>
<feature type="binding site" evidence="2">
    <location>
        <position position="339"/>
    </location>
    <ligand>
        <name>NAD(+)</name>
        <dbReference type="ChEBI" id="CHEBI:57540"/>
    </ligand>
</feature>
<feature type="binding site" evidence="2">
    <location>
        <position position="386"/>
    </location>
    <ligand>
        <name>NAD(+)</name>
        <dbReference type="ChEBI" id="CHEBI:57540"/>
    </ligand>
</feature>
<feature type="binding site" evidence="1">
    <location>
        <position position="386"/>
    </location>
    <ligand>
        <name>NADP(+)</name>
        <dbReference type="ChEBI" id="CHEBI:58349"/>
    </ligand>
</feature>
<feature type="site" description="Transition state stabilizer" evidence="2">
    <location>
        <position position="157"/>
    </location>
</feature>
<feature type="mutagenesis site" description="Less than 50% of the activity of the wild-type with vanillin as substrate in the presence of NAD(+). Less than 10% of the activity of the wild-type with vanillin as substrate in the presence of NADP(+). 4.5-fold decreased affinity for NAD(+), 11-fold decreased affinity for NADP(+) and 2.3-fold decreased affinity for vanillin compared to the wild type." evidence="5">
    <original>N</original>
    <variation>A</variation>
    <location>
        <position position="157"/>
    </location>
</feature>
<feature type="mutagenesis site" description="Less than 50% of the activity of the wild-type with vanillin as substrate in the presence of NAD(+). Less than 10% of the activity of the wild-type with vanillin as substrate in the presence of NADP(+). 4.5-fold decreased affinity for NAD(+), 11-fold decreased affinity for NADP(+) and 5-fold decreased affinity for vanillin compared to the wild type." evidence="5">
    <original>K</original>
    <variation>A</variation>
    <location>
        <position position="180"/>
    </location>
</feature>
<feature type="mutagenesis site" description="Less than 50% of the activity of the wild-type with vanillin as substrate in the presence of NAD(+). 78% of the activity of the wild-type with vanillin as substrate in the presence of NADP(+). 5-fold decreased affinity for NAD(+), 2.5-fold decreased affinity for NADP(+) and 1.5-fold decreased affinity for vanillin compared to the wild type." evidence="5">
    <original>E</original>
    <variation>A</variation>
    <location>
        <position position="199"/>
    </location>
</feature>
<feature type="mutagenesis site" description="Less than 50% of the activity of the wild-type with vanillin as substrate in the presence of NAD(+). 24% of the activity of the wild-type with vanillin as substrate in the presence of NADP(+). 3.5-fold decreased affinity for NAD(+), 5-fold decreased affinity for NADP(+) and 3.7-fold decreased affinity for vanillin compared to the wild type." evidence="5">
    <original>E</original>
    <variation>A</variation>
    <location>
        <position position="258"/>
    </location>
</feature>
<feature type="mutagenesis site" description="Less than 50% of the activity of the wild-type with vanillin as substrate in the presence of NAD(+). Less than 10% of the activity of the wild-type with vanillin as substrate in the presence of NADP(+). 4.5-fold decreased affinity for NAD(+), 7-fold decreased affinity for NADP(+) and 8-fold decreased affinity for vanillin compared to the wild type." evidence="5">
    <original>C</original>
    <variation>A</variation>
    <location>
        <position position="292"/>
    </location>
</feature>
<gene>
    <name evidence="6" type="primary">vdh</name>
    <name evidence="8" type="ordered locus">Cgl2668</name>
</gene>
<accession>Q8NMB0</accession>
<proteinExistence type="evidence at protein level"/>
<keyword id="KW-0520">NAD</keyword>
<keyword id="KW-0521">NADP</keyword>
<keyword id="KW-0560">Oxidoreductase</keyword>
<keyword id="KW-1185">Reference proteome</keyword>
<evidence type="ECO:0000250" key="1">
    <source>
        <dbReference type="UniProtKB" id="P25526"/>
    </source>
</evidence>
<evidence type="ECO:0000250" key="2">
    <source>
        <dbReference type="UniProtKB" id="P47895"/>
    </source>
</evidence>
<evidence type="ECO:0000255" key="3">
    <source>
        <dbReference type="PROSITE-ProRule" id="PRU10007"/>
    </source>
</evidence>
<evidence type="ECO:0000255" key="4">
    <source>
        <dbReference type="RuleBase" id="RU003345"/>
    </source>
</evidence>
<evidence type="ECO:0000269" key="5">
    <source>
    </source>
</evidence>
<evidence type="ECO:0000303" key="6">
    <source>
    </source>
</evidence>
<evidence type="ECO:0000305" key="7"/>
<evidence type="ECO:0000312" key="8">
    <source>
        <dbReference type="EMBL" id="BAC00062.1"/>
    </source>
</evidence>
<evidence type="ECO:0000312" key="9">
    <source>
        <dbReference type="Proteomes" id="UP000000582"/>
    </source>
</evidence>
<sequence length="484" mass="51085">MTATFAGIDATKHLIGGQWVEGNSDRISTNINPYDDSVIAESKQASIADVDAAYEAAKKAQAEWAATPAAERSAIIYRAAELLEEHREEIVEWLIKESGSTRSKANLEITLAGNITKESASFPGRVHGRISPSNTPGKENRVYRVAKGVVGVISPWNFPLNLSIRSVAPALAVGNAVVIKPASDTPVTGGVIPARIFEEAGVPAGVISTVAGAGSEIGDHFVTHAVPKLISFTGSTPVGRRVGELAINGGPMKTVALELGGNAPFVVLADADIDAAAQAAAVGAFLHQGQICMSINRVIVDAAVHDEFLEKFVEAVKNIPTGDPSAEGTLVGPVINDSQLSGLKEKIELAKKEGATVQVEGPIEGRLVHPHVFSDVTSDMEIAREEIFGPLISVLKADDEAHAAELANASDFGLSAAVWSKDIDRAAQFALQIDSGMVHINDLTVNDEPHVMFGGSKNSGLGRFNGDWAIEEFTTDRWIGIKRS</sequence>